<keyword id="KW-0903">Direct protein sequencing</keyword>
<keyword id="KW-0472">Membrane</keyword>
<keyword id="KW-0732">Signal</keyword>
<keyword id="KW-0812">Transmembrane</keyword>
<keyword id="KW-1133">Transmembrane helix</keyword>
<comment type="subcellular location">
    <subcellularLocation>
        <location evidence="1">Membrane</location>
        <topology evidence="1">Single-pass membrane protein</topology>
    </subcellularLocation>
    <text evidence="1 4">Presence in the organic matrix of the skeleton may be due to shedding of a soluble peptide.</text>
</comment>
<comment type="tissue specificity">
    <text evidence="3">Component of the acid-insoluble and acid-soluble organic matrix of the aragonitic skeleton (at protein level).</text>
</comment>
<feature type="signal peptide" evidence="1">
    <location>
        <begin position="1"/>
        <end position="28"/>
    </location>
</feature>
<feature type="chain" id="PRO_0000429757" description="Uncharacterized skeletal organic matrix protein 3" evidence="1">
    <location>
        <begin position="29"/>
        <end position="433" status="greater than"/>
    </location>
</feature>
<feature type="topological domain" description="Extracellular" evidence="1">
    <location>
        <begin position="29"/>
        <end position="274"/>
    </location>
</feature>
<feature type="transmembrane region" description="Helical" evidence="1">
    <location>
        <begin position="275"/>
        <end position="295"/>
    </location>
</feature>
<feature type="topological domain" description="Cytoplasmic" evidence="1">
    <location>
        <begin position="296"/>
        <end position="433"/>
    </location>
</feature>
<feature type="region of interest" description="Disordered" evidence="2">
    <location>
        <begin position="235"/>
        <end position="266"/>
    </location>
</feature>
<feature type="region of interest" description="Disordered" evidence="2">
    <location>
        <begin position="320"/>
        <end position="340"/>
    </location>
</feature>
<feature type="region of interest" description="Disordered" evidence="2">
    <location>
        <begin position="413"/>
        <end position="433"/>
    </location>
</feature>
<feature type="compositionally biased region" description="Polar residues" evidence="2">
    <location>
        <begin position="235"/>
        <end position="250"/>
    </location>
</feature>
<feature type="compositionally biased region" description="Basic and acidic residues" evidence="2">
    <location>
        <begin position="251"/>
        <end position="266"/>
    </location>
</feature>
<feature type="non-terminal residue" evidence="5">
    <location>
        <position position="433"/>
    </location>
</feature>
<evidence type="ECO:0000255" key="1"/>
<evidence type="ECO:0000256" key="2">
    <source>
        <dbReference type="SAM" id="MobiDB-lite"/>
    </source>
</evidence>
<evidence type="ECO:0000269" key="3">
    <source>
    </source>
</evidence>
<evidence type="ECO:0000303" key="4">
    <source>
    </source>
</evidence>
<evidence type="ECO:0000305" key="5"/>
<reference evidence="5" key="1">
    <citation type="journal article" date="2012" name="Mol. Ecol.">
        <title>Whole transcriptome analysis of the coral Acropora millepora reveals complex responses to CO(2)-driven acidification during the initiation of calcification.</title>
        <authorList>
            <person name="Moya A."/>
            <person name="Huisman L."/>
            <person name="Ball E.E."/>
            <person name="Hayward D.C."/>
            <person name="Grasso L.C."/>
            <person name="Chua C.M."/>
            <person name="Woo H.N."/>
            <person name="Gattuso J.P."/>
            <person name="Foret S."/>
            <person name="Miller D.J."/>
        </authorList>
    </citation>
    <scope>NUCLEOTIDE SEQUENCE [MRNA]</scope>
</reference>
<reference evidence="5" key="2">
    <citation type="journal article" date="2013" name="Mol. Biol. Evol.">
        <title>The skeletal proteome of the coral Acropora millepora: the evolution of calcification by co-option and domain shuffling.</title>
        <authorList>
            <person name="Ramos-Silva P."/>
            <person name="Kaandorp J."/>
            <person name="Huisman L."/>
            <person name="Marie B."/>
            <person name="Zanella-Cleon I."/>
            <person name="Guichard N."/>
            <person name="Miller D.J."/>
            <person name="Marin F."/>
        </authorList>
    </citation>
    <scope>PROTEIN SEQUENCE OF 33-46; 82-93 AND 192-202</scope>
    <scope>TISSUE SPECIFICITY</scope>
    <scope>IDENTIFICATION BY MASS SPECTROMETRY</scope>
</reference>
<protein>
    <recommendedName>
        <fullName evidence="4">Uncharacterized skeletal organic matrix protein 3</fullName>
        <shortName evidence="4">Uncharacterized SOMP-3</shortName>
    </recommendedName>
</protein>
<dbReference type="EMBL" id="JR997000">
    <property type="status" value="NOT_ANNOTATED_CDS"/>
    <property type="molecule type" value="mRNA"/>
</dbReference>
<dbReference type="SMR" id="B8RJM0"/>
<dbReference type="OrthoDB" id="5981117at2759"/>
<dbReference type="GO" id="GO:0016020">
    <property type="term" value="C:membrane"/>
    <property type="evidence" value="ECO:0007669"/>
    <property type="project" value="UniProtKB-SubCell"/>
</dbReference>
<organism>
    <name type="scientific">Acropora millepora</name>
    <name type="common">Staghorn coral</name>
    <name type="synonym">Heteropora millepora</name>
    <dbReference type="NCBI Taxonomy" id="45264"/>
    <lineage>
        <taxon>Eukaryota</taxon>
        <taxon>Metazoa</taxon>
        <taxon>Cnidaria</taxon>
        <taxon>Anthozoa</taxon>
        <taxon>Hexacorallia</taxon>
        <taxon>Scleractinia</taxon>
        <taxon>Astrocoeniina</taxon>
        <taxon>Acroporidae</taxon>
        <taxon>Acropora</taxon>
    </lineage>
</organism>
<name>USOM3_ACRMI</name>
<sequence length="433" mass="47159">MKICGLEKFRVFLSLISMVSLLCNGVNGFTIVRSMAVNGESVPDRFSNPSCRPSDCALKRASTTNGCSTTRDCCSCQCSKTRATYLTSPFNRCTTSEYIDEDCSSFFVLPDDSPPPVADITKPGHINFFSETRCHKGLRTRSWSHSVDATSWTTGKPNGFSVELVEGSSSSWKWRLSWQNGMDAKFSGLIIKLEFSCQNTRSGCFLMKSKGNYTIPNSEQWPSIIPTDVSFNLTGENANPTANSGTSARSNRNEQNKMEEPARNQAELEPKKTGVVVAGVTVSLAAGFVLALATLLLMKKKQTSLAVNAKARPNSYLGYEEPVDSAGRPEQTATESPSFDNEFYTTDCVLSLSGNNVGGKVTRMGPLPPLPGEESIYAEPMIKRSVAYQGLAEKNKQQDAGTACNVQPQPECKVIEKTSNENSHDKGTDEDKG</sequence>
<accession>B8RJM0</accession>
<proteinExistence type="evidence at protein level"/>